<comment type="function">
    <text evidence="1">Specifically methylates guanosine-37 in various tRNAs.</text>
</comment>
<comment type="catalytic activity">
    <reaction evidence="1">
        <text>guanosine(37) in tRNA + S-adenosyl-L-methionine = N(1)-methylguanosine(37) in tRNA + S-adenosyl-L-homocysteine + H(+)</text>
        <dbReference type="Rhea" id="RHEA:36899"/>
        <dbReference type="Rhea" id="RHEA-COMP:10145"/>
        <dbReference type="Rhea" id="RHEA-COMP:10147"/>
        <dbReference type="ChEBI" id="CHEBI:15378"/>
        <dbReference type="ChEBI" id="CHEBI:57856"/>
        <dbReference type="ChEBI" id="CHEBI:59789"/>
        <dbReference type="ChEBI" id="CHEBI:73542"/>
        <dbReference type="ChEBI" id="CHEBI:74269"/>
        <dbReference type="EC" id="2.1.1.228"/>
    </reaction>
</comment>
<comment type="subunit">
    <text evidence="1">Homodimer.</text>
</comment>
<comment type="subcellular location">
    <subcellularLocation>
        <location evidence="1">Cytoplasm</location>
    </subcellularLocation>
</comment>
<comment type="similarity">
    <text evidence="1">Belongs to the RNA methyltransferase TrmD family.</text>
</comment>
<reference key="1">
    <citation type="journal article" date="2007" name="Nat. Genet.">
        <title>Genomic analysis of Bartonella identifies type IV secretion systems as host adaptability factors.</title>
        <authorList>
            <person name="Saenz H.L."/>
            <person name="Engel P."/>
            <person name="Stoeckli M.C."/>
            <person name="Lanz C."/>
            <person name="Raddatz G."/>
            <person name="Vayssier-Taussat M."/>
            <person name="Birtles R."/>
            <person name="Schuster S.C."/>
            <person name="Dehio C."/>
        </authorList>
    </citation>
    <scope>NUCLEOTIDE SEQUENCE [LARGE SCALE GENOMIC DNA]</scope>
    <source>
        <strain>CIP 105476 / IBS 506</strain>
    </source>
</reference>
<organism>
    <name type="scientific">Bartonella tribocorum (strain CIP 105476 / IBS 506)</name>
    <dbReference type="NCBI Taxonomy" id="382640"/>
    <lineage>
        <taxon>Bacteria</taxon>
        <taxon>Pseudomonadati</taxon>
        <taxon>Pseudomonadota</taxon>
        <taxon>Alphaproteobacteria</taxon>
        <taxon>Hyphomicrobiales</taxon>
        <taxon>Bartonellaceae</taxon>
        <taxon>Bartonella</taxon>
    </lineage>
</organism>
<sequence length="232" mass="25803">MKFQARVLTLYPEMFPGFLGYSLAGHALERGIWSLETVQIRDFALDKHHSVDDTPAGGGAGMVMRADVLAAALDHCPQDSPRLLMSPRGRPFDQAYARRLADDSGITLVCGRFEGVDERVIEARELEEVSIGDYILSGGETAALVILDAIIRLLPGVMGNKASAKCESFENGLLEHPQYTRPSLFEGREIPPVLTSGHHKAIADWRQSQAELLTRQRRPDLYARYDKNRQKT</sequence>
<gene>
    <name evidence="1" type="primary">trmD</name>
    <name type="ordered locus">BT_2547</name>
</gene>
<feature type="chain" id="PRO_1000082506" description="tRNA (guanine-N(1)-)-methyltransferase">
    <location>
        <begin position="1"/>
        <end position="232"/>
    </location>
</feature>
<feature type="binding site" evidence="1">
    <location>
        <position position="111"/>
    </location>
    <ligand>
        <name>S-adenosyl-L-methionine</name>
        <dbReference type="ChEBI" id="CHEBI:59789"/>
    </ligand>
</feature>
<feature type="binding site" evidence="1">
    <location>
        <begin position="131"/>
        <end position="136"/>
    </location>
    <ligand>
        <name>S-adenosyl-L-methionine</name>
        <dbReference type="ChEBI" id="CHEBI:59789"/>
    </ligand>
</feature>
<keyword id="KW-0963">Cytoplasm</keyword>
<keyword id="KW-0489">Methyltransferase</keyword>
<keyword id="KW-0949">S-adenosyl-L-methionine</keyword>
<keyword id="KW-0808">Transferase</keyword>
<keyword id="KW-0819">tRNA processing</keyword>
<proteinExistence type="inferred from homology"/>
<accession>A9IZA2</accession>
<dbReference type="EC" id="2.1.1.228" evidence="1"/>
<dbReference type="EMBL" id="AM260525">
    <property type="protein sequence ID" value="CAK02511.1"/>
    <property type="molecule type" value="Genomic_DNA"/>
</dbReference>
<dbReference type="RefSeq" id="WP_012232545.1">
    <property type="nucleotide sequence ID" value="NC_010161.1"/>
</dbReference>
<dbReference type="SMR" id="A9IZA2"/>
<dbReference type="KEGG" id="btr:BT_2547"/>
<dbReference type="eggNOG" id="COG0336">
    <property type="taxonomic scope" value="Bacteria"/>
</dbReference>
<dbReference type="HOGENOM" id="CLU_047363_0_1_5"/>
<dbReference type="Proteomes" id="UP000001592">
    <property type="component" value="Chromosome"/>
</dbReference>
<dbReference type="GO" id="GO:0005829">
    <property type="term" value="C:cytosol"/>
    <property type="evidence" value="ECO:0007669"/>
    <property type="project" value="TreeGrafter"/>
</dbReference>
<dbReference type="GO" id="GO:0052906">
    <property type="term" value="F:tRNA (guanine(37)-N1)-methyltransferase activity"/>
    <property type="evidence" value="ECO:0007669"/>
    <property type="project" value="UniProtKB-UniRule"/>
</dbReference>
<dbReference type="GO" id="GO:0002939">
    <property type="term" value="P:tRNA N1-guanine methylation"/>
    <property type="evidence" value="ECO:0007669"/>
    <property type="project" value="TreeGrafter"/>
</dbReference>
<dbReference type="CDD" id="cd18080">
    <property type="entry name" value="TrmD-like"/>
    <property type="match status" value="1"/>
</dbReference>
<dbReference type="FunFam" id="3.40.1280.10:FF:000001">
    <property type="entry name" value="tRNA (guanine-N(1)-)-methyltransferase"/>
    <property type="match status" value="1"/>
</dbReference>
<dbReference type="Gene3D" id="3.40.1280.10">
    <property type="match status" value="1"/>
</dbReference>
<dbReference type="Gene3D" id="1.10.1270.20">
    <property type="entry name" value="tRNA(m1g37)methyltransferase, domain 2"/>
    <property type="match status" value="1"/>
</dbReference>
<dbReference type="HAMAP" id="MF_00605">
    <property type="entry name" value="TrmD"/>
    <property type="match status" value="1"/>
</dbReference>
<dbReference type="InterPro" id="IPR029028">
    <property type="entry name" value="Alpha/beta_knot_MTases"/>
</dbReference>
<dbReference type="InterPro" id="IPR023148">
    <property type="entry name" value="tRNA_m1G_MeTrfase_C_sf"/>
</dbReference>
<dbReference type="InterPro" id="IPR002649">
    <property type="entry name" value="tRNA_m1G_MeTrfase_TrmD"/>
</dbReference>
<dbReference type="InterPro" id="IPR029026">
    <property type="entry name" value="tRNA_m1G_MTases_N"/>
</dbReference>
<dbReference type="InterPro" id="IPR016009">
    <property type="entry name" value="tRNA_MeTrfase_TRMD/TRM10"/>
</dbReference>
<dbReference type="NCBIfam" id="NF000648">
    <property type="entry name" value="PRK00026.1"/>
    <property type="match status" value="1"/>
</dbReference>
<dbReference type="NCBIfam" id="TIGR00088">
    <property type="entry name" value="trmD"/>
    <property type="match status" value="1"/>
</dbReference>
<dbReference type="PANTHER" id="PTHR46417">
    <property type="entry name" value="TRNA (GUANINE-N(1)-)-METHYLTRANSFERASE"/>
    <property type="match status" value="1"/>
</dbReference>
<dbReference type="PANTHER" id="PTHR46417:SF1">
    <property type="entry name" value="TRNA (GUANINE-N(1)-)-METHYLTRANSFERASE"/>
    <property type="match status" value="1"/>
</dbReference>
<dbReference type="Pfam" id="PF01746">
    <property type="entry name" value="tRNA_m1G_MT"/>
    <property type="match status" value="1"/>
</dbReference>
<dbReference type="PIRSF" id="PIRSF000386">
    <property type="entry name" value="tRNA_mtase"/>
    <property type="match status" value="1"/>
</dbReference>
<dbReference type="SUPFAM" id="SSF75217">
    <property type="entry name" value="alpha/beta knot"/>
    <property type="match status" value="1"/>
</dbReference>
<evidence type="ECO:0000255" key="1">
    <source>
        <dbReference type="HAMAP-Rule" id="MF_00605"/>
    </source>
</evidence>
<name>TRMD_BART1</name>
<protein>
    <recommendedName>
        <fullName evidence="1">tRNA (guanine-N(1)-)-methyltransferase</fullName>
        <ecNumber evidence="1">2.1.1.228</ecNumber>
    </recommendedName>
    <alternativeName>
        <fullName evidence="1">M1G-methyltransferase</fullName>
    </alternativeName>
    <alternativeName>
        <fullName evidence="1">tRNA [GM37] methyltransferase</fullName>
    </alternativeName>
</protein>